<reference key="1">
    <citation type="journal article" date="2011" name="Appl. Environ. Microbiol.">
        <title>Genomic potential of Marinobacter aquaeolei, a biogeochemical 'opportunitroph'.</title>
        <authorList>
            <person name="Singer E."/>
            <person name="Webb E.A."/>
            <person name="Nelson W.C."/>
            <person name="Heidelberg J.F."/>
            <person name="Ivanova N."/>
            <person name="Pati A."/>
            <person name="Edwards K.J."/>
        </authorList>
    </citation>
    <scope>NUCLEOTIDE SEQUENCE [LARGE SCALE GENOMIC DNA]</scope>
    <source>
        <strain>ATCC 700491 / DSM 11845 / VT8</strain>
    </source>
</reference>
<name>RPOB_MARN8</name>
<comment type="function">
    <text evidence="1">DNA-dependent RNA polymerase catalyzes the transcription of DNA into RNA using the four ribonucleoside triphosphates as substrates.</text>
</comment>
<comment type="catalytic activity">
    <reaction evidence="1">
        <text>RNA(n) + a ribonucleoside 5'-triphosphate = RNA(n+1) + diphosphate</text>
        <dbReference type="Rhea" id="RHEA:21248"/>
        <dbReference type="Rhea" id="RHEA-COMP:14527"/>
        <dbReference type="Rhea" id="RHEA-COMP:17342"/>
        <dbReference type="ChEBI" id="CHEBI:33019"/>
        <dbReference type="ChEBI" id="CHEBI:61557"/>
        <dbReference type="ChEBI" id="CHEBI:140395"/>
        <dbReference type="EC" id="2.7.7.6"/>
    </reaction>
</comment>
<comment type="subunit">
    <text evidence="1">The RNAP catalytic core consists of 2 alpha, 1 beta, 1 beta' and 1 omega subunit. When a sigma factor is associated with the core the holoenzyme is formed, which can initiate transcription.</text>
</comment>
<comment type="similarity">
    <text evidence="1">Belongs to the RNA polymerase beta chain family.</text>
</comment>
<feature type="chain" id="PRO_0000300344" description="DNA-directed RNA polymerase subunit beta">
    <location>
        <begin position="1"/>
        <end position="1358"/>
    </location>
</feature>
<feature type="region of interest" description="Disordered" evidence="2">
    <location>
        <begin position="1033"/>
        <end position="1053"/>
    </location>
</feature>
<feature type="compositionally biased region" description="Basic and acidic residues" evidence="2">
    <location>
        <begin position="1033"/>
        <end position="1051"/>
    </location>
</feature>
<accession>A1TYJ0</accession>
<keyword id="KW-0240">DNA-directed RNA polymerase</keyword>
<keyword id="KW-0548">Nucleotidyltransferase</keyword>
<keyword id="KW-0804">Transcription</keyword>
<keyword id="KW-0808">Transferase</keyword>
<evidence type="ECO:0000255" key="1">
    <source>
        <dbReference type="HAMAP-Rule" id="MF_01321"/>
    </source>
</evidence>
<evidence type="ECO:0000256" key="2">
    <source>
        <dbReference type="SAM" id="MobiDB-lite"/>
    </source>
</evidence>
<gene>
    <name evidence="1" type="primary">rpoB</name>
    <name type="ordered locus">Maqu_0712</name>
</gene>
<protein>
    <recommendedName>
        <fullName evidence="1">DNA-directed RNA polymerase subunit beta</fullName>
        <shortName evidence="1">RNAP subunit beta</shortName>
        <ecNumber evidence="1">2.7.7.6</ecNumber>
    </recommendedName>
    <alternativeName>
        <fullName evidence="1">RNA polymerase subunit beta</fullName>
    </alternativeName>
    <alternativeName>
        <fullName evidence="1">Transcriptase subunit beta</fullName>
    </alternativeName>
</protein>
<sequence>MTYSYTEKKRIRKDFSKLPSVMEVPYLLSIQLDSFRDYLQMETAPEDRRETGLHAAFKSVFPIVSYSGNAALEYVSYRIGEPVFDVKECQLRGVTYAAPLRVKVRLIIYDKESSNKAIKDIKEQEVYMGEMPLMTENGTFVVNGTERVIVSQLHRSPGVFFDHDKGKTHSSGKLLYSARVIPYRGSWLDFEFDPKDAVFVRIDRRRKLPASILLRGLGYTSEQMLEMFFETSKFSLGAEVCKLELVPSRLRGDIATFDIKDNDGNVIVEEGRRITARHIKQLEKAGITELEVPTEYLYGRVLAKDMIDQSTGEVLVECNTELTEEVVTKILDAGVKDIETLYTNDLDCGPFMSDTLRIDPTRTPLEALVEIYRMMRPGEPPTKESAENLFNNLFFSEERYDLSAVGRMKLNRRLGREESTGEGTLTHDDIIDVLKTLIAIRNGQGQVDDIDNLGNRRVRCVGEMAENQFRVGLVRVERAVRERLSLAESEGLMPQDLINAKPVAAAVKEFFGSSQLSQFMDQNNPLSEVTHKRRISALGPGGLTRERAGFEVRDVHPTHYGRVCPIETPEGPNIGLINSLATYARSNSYGFLESPYRKVVDGVVTDEVVYLSAIEESNYVIAQASAATDEGKRLTDELVTVRHQNEFTVAPPEAVNFMDVSPRQVVSVAASLIPFLEHDDANRALMGANMQRQAVPTLKSQVPLVGTGVERTVAQDSGVCVTARRGGVIESVDAARIVVRVNNEETEAGDAGVDIYNLTKYTRSNQNTCINQRSIVRQGDVIARGDVLADGPSVDLGELALGQNMRIAFMPWNGYNFEDSILISEKVVQEDRLTTIHIQELTCVARDTKLGSEEITADIPNVGESALSKLDESGIVYIGAEVGPGDILVGKVTPKGETQLTPEEKLLRAIFGEKASDVKDTSQRVPTGTRGTVIDVQVFTRDGIEKDARALSIEKEQLDKYRKDLKDEYRIVEGATFERLMAALKGQEVISGPGLKKGAKLEEAYLAELPRADWFKLRMKDEALNELLEKSEQGLEDRKKEHEARFDDKKGKLQQGDDLAPGVLKIVKVYLAIKRRIQPGDKMAGRHGNKGVISAVMPIEDMPYDEFGNTVDIVLNPLGVPSRMNVGQVLETHLGAAAKGLGERISRMLDEQRKVAELRKLLDEIYNHSDEVFKVDLDSLTDKEIFELCNNLRGGVPMATPVFDGAKEAEVKRMLELAGLDTTGQTKLYDGRTGDAFDRPVTVGYMYILKLNHLIDDKMHARSTGSYSLVTQQPLGGKAQFGGQRFGEMEVWALEAYGAAYTLQEMLTVKSDDVNGRTKMYKNIVDGDHRMEPGMPESFNVLVKEIRSLGIDIELESE</sequence>
<proteinExistence type="inferred from homology"/>
<organism>
    <name type="scientific">Marinobacter nauticus (strain ATCC 700491 / DSM 11845 / VT8)</name>
    <name type="common">Marinobacter aquaeolei</name>
    <dbReference type="NCBI Taxonomy" id="351348"/>
    <lineage>
        <taxon>Bacteria</taxon>
        <taxon>Pseudomonadati</taxon>
        <taxon>Pseudomonadota</taxon>
        <taxon>Gammaproteobacteria</taxon>
        <taxon>Pseudomonadales</taxon>
        <taxon>Marinobacteraceae</taxon>
        <taxon>Marinobacter</taxon>
    </lineage>
</organism>
<dbReference type="EC" id="2.7.7.6" evidence="1"/>
<dbReference type="EMBL" id="CP000514">
    <property type="protein sequence ID" value="ABM17809.1"/>
    <property type="molecule type" value="Genomic_DNA"/>
</dbReference>
<dbReference type="RefSeq" id="WP_011784241.1">
    <property type="nucleotide sequence ID" value="NC_008740.1"/>
</dbReference>
<dbReference type="SMR" id="A1TYJ0"/>
<dbReference type="STRING" id="351348.Maqu_0712"/>
<dbReference type="GeneID" id="31820087"/>
<dbReference type="KEGG" id="maq:Maqu_0712"/>
<dbReference type="eggNOG" id="COG0085">
    <property type="taxonomic scope" value="Bacteria"/>
</dbReference>
<dbReference type="HOGENOM" id="CLU_000524_4_0_6"/>
<dbReference type="OrthoDB" id="9803954at2"/>
<dbReference type="Proteomes" id="UP000000998">
    <property type="component" value="Chromosome"/>
</dbReference>
<dbReference type="GO" id="GO:0000428">
    <property type="term" value="C:DNA-directed RNA polymerase complex"/>
    <property type="evidence" value="ECO:0007669"/>
    <property type="project" value="UniProtKB-KW"/>
</dbReference>
<dbReference type="GO" id="GO:0003677">
    <property type="term" value="F:DNA binding"/>
    <property type="evidence" value="ECO:0007669"/>
    <property type="project" value="UniProtKB-UniRule"/>
</dbReference>
<dbReference type="GO" id="GO:0003899">
    <property type="term" value="F:DNA-directed RNA polymerase activity"/>
    <property type="evidence" value="ECO:0007669"/>
    <property type="project" value="UniProtKB-UniRule"/>
</dbReference>
<dbReference type="GO" id="GO:0032549">
    <property type="term" value="F:ribonucleoside binding"/>
    <property type="evidence" value="ECO:0007669"/>
    <property type="project" value="InterPro"/>
</dbReference>
<dbReference type="GO" id="GO:0006351">
    <property type="term" value="P:DNA-templated transcription"/>
    <property type="evidence" value="ECO:0007669"/>
    <property type="project" value="UniProtKB-UniRule"/>
</dbReference>
<dbReference type="CDD" id="cd00653">
    <property type="entry name" value="RNA_pol_B_RPB2"/>
    <property type="match status" value="1"/>
</dbReference>
<dbReference type="FunFam" id="2.40.50.100:FF:000006">
    <property type="entry name" value="DNA-directed RNA polymerase subunit beta"/>
    <property type="match status" value="1"/>
</dbReference>
<dbReference type="FunFam" id="2.40.50.150:FF:000001">
    <property type="entry name" value="DNA-directed RNA polymerase subunit beta"/>
    <property type="match status" value="1"/>
</dbReference>
<dbReference type="FunFam" id="3.90.1100.10:FF:000002">
    <property type="entry name" value="DNA-directed RNA polymerase subunit beta"/>
    <property type="match status" value="1"/>
</dbReference>
<dbReference type="FunFam" id="3.90.1110.10:FF:000001">
    <property type="entry name" value="DNA-directed RNA polymerase subunit beta"/>
    <property type="match status" value="1"/>
</dbReference>
<dbReference type="FunFam" id="3.90.1110.10:FF:000004">
    <property type="entry name" value="DNA-directed RNA polymerase subunit beta"/>
    <property type="match status" value="1"/>
</dbReference>
<dbReference type="FunFam" id="3.90.1800.10:FF:000001">
    <property type="entry name" value="DNA-directed RNA polymerase subunit beta"/>
    <property type="match status" value="1"/>
</dbReference>
<dbReference type="Gene3D" id="2.40.50.100">
    <property type="match status" value="1"/>
</dbReference>
<dbReference type="Gene3D" id="2.40.50.150">
    <property type="match status" value="1"/>
</dbReference>
<dbReference type="Gene3D" id="3.90.1100.10">
    <property type="match status" value="2"/>
</dbReference>
<dbReference type="Gene3D" id="6.10.140.1670">
    <property type="match status" value="1"/>
</dbReference>
<dbReference type="Gene3D" id="2.30.150.10">
    <property type="entry name" value="DNA-directed RNA polymerase, beta subunit, external 1 domain"/>
    <property type="match status" value="1"/>
</dbReference>
<dbReference type="Gene3D" id="2.40.270.10">
    <property type="entry name" value="DNA-directed RNA polymerase, subunit 2, domain 6"/>
    <property type="match status" value="2"/>
</dbReference>
<dbReference type="Gene3D" id="3.90.1800.10">
    <property type="entry name" value="RNA polymerase alpha subunit dimerisation domain"/>
    <property type="match status" value="1"/>
</dbReference>
<dbReference type="Gene3D" id="3.90.1110.10">
    <property type="entry name" value="RNA polymerase Rpb2, domain 2"/>
    <property type="match status" value="2"/>
</dbReference>
<dbReference type="HAMAP" id="MF_01321">
    <property type="entry name" value="RNApol_bact_RpoB"/>
    <property type="match status" value="1"/>
</dbReference>
<dbReference type="InterPro" id="IPR042107">
    <property type="entry name" value="DNA-dir_RNA_pol_bsu_ext_1_sf"/>
</dbReference>
<dbReference type="InterPro" id="IPR019462">
    <property type="entry name" value="DNA-dir_RNA_pol_bsu_external_1"/>
</dbReference>
<dbReference type="InterPro" id="IPR015712">
    <property type="entry name" value="DNA-dir_RNA_pol_su2"/>
</dbReference>
<dbReference type="InterPro" id="IPR007120">
    <property type="entry name" value="DNA-dir_RNAP_su2_dom"/>
</dbReference>
<dbReference type="InterPro" id="IPR037033">
    <property type="entry name" value="DNA-dir_RNAP_su2_hyb_sf"/>
</dbReference>
<dbReference type="InterPro" id="IPR010243">
    <property type="entry name" value="RNA_pol_bsu_bac"/>
</dbReference>
<dbReference type="InterPro" id="IPR007121">
    <property type="entry name" value="RNA_pol_bsu_CS"/>
</dbReference>
<dbReference type="InterPro" id="IPR007644">
    <property type="entry name" value="RNA_pol_bsu_protrusion"/>
</dbReference>
<dbReference type="InterPro" id="IPR007642">
    <property type="entry name" value="RNA_pol_Rpb2_2"/>
</dbReference>
<dbReference type="InterPro" id="IPR037034">
    <property type="entry name" value="RNA_pol_Rpb2_2_sf"/>
</dbReference>
<dbReference type="InterPro" id="IPR007645">
    <property type="entry name" value="RNA_pol_Rpb2_3"/>
</dbReference>
<dbReference type="InterPro" id="IPR007641">
    <property type="entry name" value="RNA_pol_Rpb2_7"/>
</dbReference>
<dbReference type="InterPro" id="IPR014724">
    <property type="entry name" value="RNA_pol_RPB2_OB-fold"/>
</dbReference>
<dbReference type="NCBIfam" id="NF001616">
    <property type="entry name" value="PRK00405.1"/>
    <property type="match status" value="1"/>
</dbReference>
<dbReference type="NCBIfam" id="TIGR02013">
    <property type="entry name" value="rpoB"/>
    <property type="match status" value="1"/>
</dbReference>
<dbReference type="PANTHER" id="PTHR20856">
    <property type="entry name" value="DNA-DIRECTED RNA POLYMERASE I SUBUNIT 2"/>
    <property type="match status" value="1"/>
</dbReference>
<dbReference type="Pfam" id="PF04563">
    <property type="entry name" value="RNA_pol_Rpb2_1"/>
    <property type="match status" value="1"/>
</dbReference>
<dbReference type="Pfam" id="PF04561">
    <property type="entry name" value="RNA_pol_Rpb2_2"/>
    <property type="match status" value="2"/>
</dbReference>
<dbReference type="Pfam" id="PF04565">
    <property type="entry name" value="RNA_pol_Rpb2_3"/>
    <property type="match status" value="1"/>
</dbReference>
<dbReference type="Pfam" id="PF10385">
    <property type="entry name" value="RNA_pol_Rpb2_45"/>
    <property type="match status" value="1"/>
</dbReference>
<dbReference type="Pfam" id="PF00562">
    <property type="entry name" value="RNA_pol_Rpb2_6"/>
    <property type="match status" value="1"/>
</dbReference>
<dbReference type="Pfam" id="PF04560">
    <property type="entry name" value="RNA_pol_Rpb2_7"/>
    <property type="match status" value="1"/>
</dbReference>
<dbReference type="SUPFAM" id="SSF64484">
    <property type="entry name" value="beta and beta-prime subunits of DNA dependent RNA-polymerase"/>
    <property type="match status" value="1"/>
</dbReference>
<dbReference type="PROSITE" id="PS01166">
    <property type="entry name" value="RNA_POL_BETA"/>
    <property type="match status" value="1"/>
</dbReference>